<feature type="signal peptide" evidence="1">
    <location>
        <begin position="1"/>
        <end position="16"/>
    </location>
</feature>
<feature type="chain" id="PRO_1000185919" description="Membrane-bound lytic murein transglycosylase C">
    <location>
        <begin position="17"/>
        <end position="359"/>
    </location>
</feature>
<feature type="lipid moiety-binding region" description="N-palmitoyl cysteine" evidence="1">
    <location>
        <position position="17"/>
    </location>
</feature>
<feature type="lipid moiety-binding region" description="S-diacylglycerol cysteine" evidence="1">
    <location>
        <position position="17"/>
    </location>
</feature>
<gene>
    <name evidence="1" type="primary">mltC</name>
    <name type="ordered locus">EC55989_3256</name>
</gene>
<accession>B7LFM1</accession>
<dbReference type="EC" id="4.2.2.n1" evidence="1"/>
<dbReference type="EMBL" id="CU928145">
    <property type="protein sequence ID" value="CAU99262.1"/>
    <property type="molecule type" value="Genomic_DNA"/>
</dbReference>
<dbReference type="RefSeq" id="WP_001298916.1">
    <property type="nucleotide sequence ID" value="NC_011748.1"/>
</dbReference>
<dbReference type="SMR" id="B7LFM1"/>
<dbReference type="CAZy" id="GH23">
    <property type="family name" value="Glycoside Hydrolase Family 23"/>
</dbReference>
<dbReference type="GeneID" id="93779028"/>
<dbReference type="KEGG" id="eck:EC55989_3256"/>
<dbReference type="HOGENOM" id="CLU_044583_0_0_6"/>
<dbReference type="Proteomes" id="UP000000746">
    <property type="component" value="Chromosome"/>
</dbReference>
<dbReference type="GO" id="GO:0009279">
    <property type="term" value="C:cell outer membrane"/>
    <property type="evidence" value="ECO:0007669"/>
    <property type="project" value="UniProtKB-SubCell"/>
</dbReference>
<dbReference type="GO" id="GO:0016798">
    <property type="term" value="F:hydrolase activity, acting on glycosyl bonds"/>
    <property type="evidence" value="ECO:0007669"/>
    <property type="project" value="InterPro"/>
</dbReference>
<dbReference type="GO" id="GO:0008933">
    <property type="term" value="F:peptidoglycan lytic transglycosylase activity"/>
    <property type="evidence" value="ECO:0007669"/>
    <property type="project" value="UniProtKB-UniRule"/>
</dbReference>
<dbReference type="GO" id="GO:0016998">
    <property type="term" value="P:cell wall macromolecule catabolic process"/>
    <property type="evidence" value="ECO:0007669"/>
    <property type="project" value="UniProtKB-UniRule"/>
</dbReference>
<dbReference type="GO" id="GO:0071555">
    <property type="term" value="P:cell wall organization"/>
    <property type="evidence" value="ECO:0007669"/>
    <property type="project" value="UniProtKB-KW"/>
</dbReference>
<dbReference type="GO" id="GO:0000270">
    <property type="term" value="P:peptidoglycan metabolic process"/>
    <property type="evidence" value="ECO:0007669"/>
    <property type="project" value="InterPro"/>
</dbReference>
<dbReference type="CDD" id="cd16893">
    <property type="entry name" value="LT_MltC_MltE"/>
    <property type="match status" value="1"/>
</dbReference>
<dbReference type="FunFam" id="1.10.530.10:FF:000002">
    <property type="entry name" value="Membrane-bound lytic murein transglycosylase C"/>
    <property type="match status" value="1"/>
</dbReference>
<dbReference type="Gene3D" id="1.10.530.10">
    <property type="match status" value="1"/>
</dbReference>
<dbReference type="HAMAP" id="MF_01616">
    <property type="entry name" value="MltC"/>
    <property type="match status" value="1"/>
</dbReference>
<dbReference type="InterPro" id="IPR023346">
    <property type="entry name" value="Lysozyme-like_dom_sf"/>
</dbReference>
<dbReference type="InterPro" id="IPR023664">
    <property type="entry name" value="Murein_transglycosylaseC"/>
</dbReference>
<dbReference type="InterPro" id="IPR024570">
    <property type="entry name" value="Murein_transglycosylaseC_N"/>
</dbReference>
<dbReference type="InterPro" id="IPR000189">
    <property type="entry name" value="Transglyc_AS"/>
</dbReference>
<dbReference type="InterPro" id="IPR008258">
    <property type="entry name" value="Transglycosylase_SLT_dom_1"/>
</dbReference>
<dbReference type="NCBIfam" id="NF008670">
    <property type="entry name" value="PRK11671.1"/>
    <property type="match status" value="1"/>
</dbReference>
<dbReference type="PANTHER" id="PTHR37423:SF2">
    <property type="entry name" value="MEMBRANE-BOUND LYTIC MUREIN TRANSGLYCOSYLASE C"/>
    <property type="match status" value="1"/>
</dbReference>
<dbReference type="PANTHER" id="PTHR37423">
    <property type="entry name" value="SOLUBLE LYTIC MUREIN TRANSGLYCOSYLASE-RELATED"/>
    <property type="match status" value="1"/>
</dbReference>
<dbReference type="Pfam" id="PF11873">
    <property type="entry name" value="Mltc_N"/>
    <property type="match status" value="1"/>
</dbReference>
<dbReference type="Pfam" id="PF01464">
    <property type="entry name" value="SLT"/>
    <property type="match status" value="1"/>
</dbReference>
<dbReference type="SUPFAM" id="SSF53955">
    <property type="entry name" value="Lysozyme-like"/>
    <property type="match status" value="1"/>
</dbReference>
<dbReference type="PROSITE" id="PS51257">
    <property type="entry name" value="PROKAR_LIPOPROTEIN"/>
    <property type="match status" value="1"/>
</dbReference>
<dbReference type="PROSITE" id="PS00922">
    <property type="entry name" value="TRANSGLYCOSYLASE"/>
    <property type="match status" value="1"/>
</dbReference>
<proteinExistence type="inferred from homology"/>
<sequence length="359" mass="40112">MKKYLALALIAPLLISCSTTKKGDTYNEAWVKDTNGFDILMGQFAHNIENIWGFKEVVIAGPKDYVKYTDQYQTRSHINFDDGTITIETIAGTEPAAHLRRAIIKTLLMGDDPSSVDLYSDVDDITISKEPFLYGQVVDNTGQPIRWEGRASNFADYLLKNRLQSRSNGLRIIYSVTINMVPNHLDKRAHKYLGMVRQASRKYGVDESLILAIMQTESSFNPYAVSRSDALGLMQVVQHTAGKDVFRSQGKSGTPSRSFLFDPASNIDTGTAYLAMLNNVYLGGIDNPTSRRYAVITAYNGGAGSVLRVFSNDKIQAANIINTMTPGDVYQTLTTRHPSAESRRYLYKVNTAQKSYRRR</sequence>
<reference key="1">
    <citation type="journal article" date="2009" name="PLoS Genet.">
        <title>Organised genome dynamics in the Escherichia coli species results in highly diverse adaptive paths.</title>
        <authorList>
            <person name="Touchon M."/>
            <person name="Hoede C."/>
            <person name="Tenaillon O."/>
            <person name="Barbe V."/>
            <person name="Baeriswyl S."/>
            <person name="Bidet P."/>
            <person name="Bingen E."/>
            <person name="Bonacorsi S."/>
            <person name="Bouchier C."/>
            <person name="Bouvet O."/>
            <person name="Calteau A."/>
            <person name="Chiapello H."/>
            <person name="Clermont O."/>
            <person name="Cruveiller S."/>
            <person name="Danchin A."/>
            <person name="Diard M."/>
            <person name="Dossat C."/>
            <person name="Karoui M.E."/>
            <person name="Frapy E."/>
            <person name="Garry L."/>
            <person name="Ghigo J.M."/>
            <person name="Gilles A.M."/>
            <person name="Johnson J."/>
            <person name="Le Bouguenec C."/>
            <person name="Lescat M."/>
            <person name="Mangenot S."/>
            <person name="Martinez-Jehanne V."/>
            <person name="Matic I."/>
            <person name="Nassif X."/>
            <person name="Oztas S."/>
            <person name="Petit M.A."/>
            <person name="Pichon C."/>
            <person name="Rouy Z."/>
            <person name="Ruf C.S."/>
            <person name="Schneider D."/>
            <person name="Tourret J."/>
            <person name="Vacherie B."/>
            <person name="Vallenet D."/>
            <person name="Medigue C."/>
            <person name="Rocha E.P.C."/>
            <person name="Denamur E."/>
        </authorList>
    </citation>
    <scope>NUCLEOTIDE SEQUENCE [LARGE SCALE GENOMIC DNA]</scope>
    <source>
        <strain>55989 / EAEC</strain>
    </source>
</reference>
<name>MLTC_ECO55</name>
<organism>
    <name type="scientific">Escherichia coli (strain 55989 / EAEC)</name>
    <dbReference type="NCBI Taxonomy" id="585055"/>
    <lineage>
        <taxon>Bacteria</taxon>
        <taxon>Pseudomonadati</taxon>
        <taxon>Pseudomonadota</taxon>
        <taxon>Gammaproteobacteria</taxon>
        <taxon>Enterobacterales</taxon>
        <taxon>Enterobacteriaceae</taxon>
        <taxon>Escherichia</taxon>
    </lineage>
</organism>
<comment type="function">
    <text evidence="1">Murein-degrading enzyme. May play a role in recycling of muropeptides during cell elongation and/or cell division.</text>
</comment>
<comment type="catalytic activity">
    <reaction evidence="1">
        <text>Exolytic cleavage of the (1-&gt;4)-beta-glycosidic linkage between N-acetylmuramic acid (MurNAc) and N-acetylglucosamine (GlcNAc) residues in peptidoglycan, from either the reducing or the non-reducing ends of the peptidoglycan chains, with concomitant formation of a 1,6-anhydrobond in the MurNAc residue.</text>
        <dbReference type="EC" id="4.2.2.n1"/>
    </reaction>
</comment>
<comment type="subcellular location">
    <subcellularLocation>
        <location evidence="1">Cell outer membrane</location>
        <topology evidence="1">Lipid-anchor</topology>
    </subcellularLocation>
</comment>
<comment type="similarity">
    <text evidence="1">Belongs to the transglycosylase Slt family.</text>
</comment>
<protein>
    <recommendedName>
        <fullName evidence="1">Membrane-bound lytic murein transglycosylase C</fullName>
        <ecNumber evidence="1">4.2.2.n1</ecNumber>
    </recommendedName>
    <alternativeName>
        <fullName evidence="1">Murein lyase C</fullName>
    </alternativeName>
</protein>
<evidence type="ECO:0000255" key="1">
    <source>
        <dbReference type="HAMAP-Rule" id="MF_01616"/>
    </source>
</evidence>
<keyword id="KW-0998">Cell outer membrane</keyword>
<keyword id="KW-0961">Cell wall biogenesis/degradation</keyword>
<keyword id="KW-0449">Lipoprotein</keyword>
<keyword id="KW-0456">Lyase</keyword>
<keyword id="KW-0472">Membrane</keyword>
<keyword id="KW-0564">Palmitate</keyword>
<keyword id="KW-1185">Reference proteome</keyword>
<keyword id="KW-0732">Signal</keyword>